<keyword id="KW-1003">Cell membrane</keyword>
<keyword id="KW-0186">Copper</keyword>
<keyword id="KW-1015">Disulfide bond</keyword>
<keyword id="KW-0325">Glycoprotein</keyword>
<keyword id="KW-0336">GPI-anchor</keyword>
<keyword id="KW-0449">Lipoprotein</keyword>
<keyword id="KW-0472">Membrane</keyword>
<keyword id="KW-0479">Metal-binding</keyword>
<keyword id="KW-0488">Methylation</keyword>
<keyword id="KW-1185">Reference proteome</keyword>
<keyword id="KW-0732">Signal</keyword>
<accession>Q5B428</accession>
<accession>C8VAX4</accession>
<feature type="signal peptide" evidence="6">
    <location>
        <begin position="1"/>
        <end position="23"/>
    </location>
</feature>
<feature type="chain" id="PRO_5010292104" description="Lytic polysaccharide monooxygenase-like protein ANIA_04702" evidence="4">
    <location>
        <begin position="24"/>
        <end position="215"/>
    </location>
</feature>
<feature type="propeptide" id="PRO_0000459758" description="Removed in mature form" evidence="4">
    <location>
        <begin position="216"/>
        <end position="244"/>
    </location>
</feature>
<feature type="binding site" evidence="1">
    <location>
        <position position="24"/>
    </location>
    <ligand>
        <name>Cu(2+)</name>
        <dbReference type="ChEBI" id="CHEBI:29036"/>
    </ligand>
</feature>
<feature type="modified residue" description="Methylhistidine" evidence="6">
    <location>
        <position position="24"/>
    </location>
</feature>
<feature type="lipid moiety-binding region" description="GPI-anchor amidated asparagine" evidence="4">
    <location>
        <position position="215"/>
    </location>
</feature>
<feature type="glycosylation site" description="N-linked (GlcNAc...) asparagine" evidence="5">
    <location>
        <position position="57"/>
    </location>
</feature>
<feature type="glycosylation site" description="N-linked (GlcNAc...) asparagine" evidence="5">
    <location>
        <position position="80"/>
    </location>
</feature>
<feature type="glycosylation site" description="N-linked (GlcNAc...) asparagine" evidence="5">
    <location>
        <position position="118"/>
    </location>
</feature>
<feature type="glycosylation site" description="N-linked (GlcNAc...) asparagine" evidence="5">
    <location>
        <position position="159"/>
    </location>
</feature>
<feature type="glycosylation site" description="N-linked (GlcNAc...) asparagine" evidence="5">
    <location>
        <position position="192"/>
    </location>
</feature>
<feature type="glycosylation site" description="N-linked (GlcNAc...) asparagine" evidence="5">
    <location>
        <position position="198"/>
    </location>
</feature>
<feature type="disulfide bond" evidence="1">
    <location>
        <begin position="72"/>
        <end position="177"/>
    </location>
</feature>
<feature type="disulfide bond" evidence="1">
    <location>
        <begin position="142"/>
        <end position="196"/>
    </location>
</feature>
<comment type="function">
    <text evidence="2 3 6">Lytic polysaccharide monooxygenase-like protein that has diverged to biological functions other than polysaccharide degradation since it does not perform oxidative cleavage of polysaccharides (PubMed:37452022). Acts as a cell surface-bound protein that functions in the copper-accumulation pathway (By similarity). May also act as the major cell wall sensor that regulates MAP kinase-dependent hyphal anastomosis, the fusion of hyphal cells (By similarity).</text>
</comment>
<comment type="cofactor">
    <cofactor evidence="1">
        <name>Cu(2+)</name>
        <dbReference type="ChEBI" id="CHEBI:29036"/>
    </cofactor>
    <text evidence="1">Binds 1 copper ion per subunit.</text>
</comment>
<comment type="subcellular location">
    <subcellularLocation>
        <location evidence="4">Cell membrane</location>
        <topology evidence="4">Lipid-anchor</topology>
        <topology evidence="4">GPI-anchor</topology>
    </subcellularLocation>
    <text evidence="9">Proteins attached to a GPI anchor via their C terminus are found in the outer leaflet of the lipid bilayer facing the extracellular environment. GPI anchors can also be considered as predetermined breaking points, which allow the release of proteins into the extracellular environment upon enzymatic cleavage.</text>
</comment>
<comment type="PTM">
    <text evidence="6">The catalytically essential N-terminal histidine His-24 is post-translationally modified by methylation to prevent protonation of the histidine side chain, and protect the critical active site of the enzyme from oxidative damage.</text>
</comment>
<comment type="similarity">
    <text evidence="8">Belongs to the X325 family.</text>
</comment>
<protein>
    <recommendedName>
        <fullName evidence="7">Lytic polysaccharide monooxygenase-like protein ANIA_04702</fullName>
        <shortName evidence="7">LPMO-like protein ANIA_04702</shortName>
    </recommendedName>
    <alternativeName>
        <fullName evidence="7">X325 family protein ANIA_04702</fullName>
    </alternativeName>
</protein>
<sequence>MLMSTSPSPWLAAAMLCIGLANAHTVIVYPGYRGNNLHTTGTVEGADGLGIAWSSDNETLIYPYGMQWSYPCGGMPTSENRTKWPVQGGAVSFQPGWFQGHSRAQIYINIGLGTVPPNMSHPMITPFEIVGPDNDPYPGTICLPQVRLPAGIEVQVGDNATIQVIELAQHGAALYNCADITFAEPEDVAEVNSTNCFNSSHISFETIFTTSSLENAGLEAVTVPSFLTAVVPTFLGIAYGLLMA</sequence>
<evidence type="ECO:0000250" key="1">
    <source>
        <dbReference type="UniProtKB" id="A0A4P9I8G4"/>
    </source>
</evidence>
<evidence type="ECO:0000250" key="2">
    <source>
        <dbReference type="UniProtKB" id="J9VHN6"/>
    </source>
</evidence>
<evidence type="ECO:0000250" key="3">
    <source>
        <dbReference type="UniProtKB" id="V5IRP6"/>
    </source>
</evidence>
<evidence type="ECO:0000255" key="4"/>
<evidence type="ECO:0000255" key="5">
    <source>
        <dbReference type="PROSITE-ProRule" id="PRU00498"/>
    </source>
</evidence>
<evidence type="ECO:0000269" key="6">
    <source>
    </source>
</evidence>
<evidence type="ECO:0000303" key="7">
    <source>
    </source>
</evidence>
<evidence type="ECO:0000305" key="8"/>
<evidence type="ECO:0000305" key="9">
    <source>
    </source>
</evidence>
<organism>
    <name type="scientific">Emericella nidulans (strain FGSC A4 / ATCC 38163 / CBS 112.46 / NRRL 194 / M139)</name>
    <name type="common">Aspergillus nidulans</name>
    <dbReference type="NCBI Taxonomy" id="227321"/>
    <lineage>
        <taxon>Eukaryota</taxon>
        <taxon>Fungi</taxon>
        <taxon>Dikarya</taxon>
        <taxon>Ascomycota</taxon>
        <taxon>Pezizomycotina</taxon>
        <taxon>Eurotiomycetes</taxon>
        <taxon>Eurotiomycetidae</taxon>
        <taxon>Eurotiales</taxon>
        <taxon>Aspergillaceae</taxon>
        <taxon>Aspergillus</taxon>
        <taxon>Aspergillus subgen. Nidulantes</taxon>
    </lineage>
</organism>
<reference key="1">
    <citation type="journal article" date="2005" name="Nature">
        <title>Sequencing of Aspergillus nidulans and comparative analysis with A. fumigatus and A. oryzae.</title>
        <authorList>
            <person name="Galagan J.E."/>
            <person name="Calvo S.E."/>
            <person name="Cuomo C."/>
            <person name="Ma L.-J."/>
            <person name="Wortman J.R."/>
            <person name="Batzoglou S."/>
            <person name="Lee S.-I."/>
            <person name="Bastuerkmen M."/>
            <person name="Spevak C.C."/>
            <person name="Clutterbuck J."/>
            <person name="Kapitonov V."/>
            <person name="Jurka J."/>
            <person name="Scazzocchio C."/>
            <person name="Farman M.L."/>
            <person name="Butler J."/>
            <person name="Purcell S."/>
            <person name="Harris S."/>
            <person name="Braus G.H."/>
            <person name="Draht O."/>
            <person name="Busch S."/>
            <person name="D'Enfert C."/>
            <person name="Bouchier C."/>
            <person name="Goldman G.H."/>
            <person name="Bell-Pedersen D."/>
            <person name="Griffiths-Jones S."/>
            <person name="Doonan J.H."/>
            <person name="Yu J."/>
            <person name="Vienken K."/>
            <person name="Pain A."/>
            <person name="Freitag M."/>
            <person name="Selker E.U."/>
            <person name="Archer D.B."/>
            <person name="Penalva M.A."/>
            <person name="Oakley B.R."/>
            <person name="Momany M."/>
            <person name="Tanaka T."/>
            <person name="Kumagai T."/>
            <person name="Asai K."/>
            <person name="Machida M."/>
            <person name="Nierman W.C."/>
            <person name="Denning D.W."/>
            <person name="Caddick M.X."/>
            <person name="Hynes M."/>
            <person name="Paoletti M."/>
            <person name="Fischer R."/>
            <person name="Miller B.L."/>
            <person name="Dyer P.S."/>
            <person name="Sachs M.S."/>
            <person name="Osmani S.A."/>
            <person name="Birren B.W."/>
        </authorList>
    </citation>
    <scope>NUCLEOTIDE SEQUENCE [LARGE SCALE GENOMIC DNA]</scope>
    <source>
        <strain>FGSC A4 / ATCC 38163 / CBS 112.46 / NRRL 194 / M139</strain>
    </source>
</reference>
<reference key="2">
    <citation type="journal article" date="2009" name="Fungal Genet. Biol.">
        <title>The 2008 update of the Aspergillus nidulans genome annotation: a community effort.</title>
        <authorList>
            <person name="Wortman J.R."/>
            <person name="Gilsenan J.M."/>
            <person name="Joardar V."/>
            <person name="Deegan J."/>
            <person name="Clutterbuck J."/>
            <person name="Andersen M.R."/>
            <person name="Archer D."/>
            <person name="Bencina M."/>
            <person name="Braus G."/>
            <person name="Coutinho P."/>
            <person name="von Dohren H."/>
            <person name="Doonan J."/>
            <person name="Driessen A.J."/>
            <person name="Durek P."/>
            <person name="Espeso E."/>
            <person name="Fekete E."/>
            <person name="Flipphi M."/>
            <person name="Estrada C.G."/>
            <person name="Geysens S."/>
            <person name="Goldman G."/>
            <person name="de Groot P.W."/>
            <person name="Hansen K."/>
            <person name="Harris S.D."/>
            <person name="Heinekamp T."/>
            <person name="Helmstaedt K."/>
            <person name="Henrissat B."/>
            <person name="Hofmann G."/>
            <person name="Homan T."/>
            <person name="Horio T."/>
            <person name="Horiuchi H."/>
            <person name="James S."/>
            <person name="Jones M."/>
            <person name="Karaffa L."/>
            <person name="Karanyi Z."/>
            <person name="Kato M."/>
            <person name="Keller N."/>
            <person name="Kelly D.E."/>
            <person name="Kiel J.A."/>
            <person name="Kim J.M."/>
            <person name="van der Klei I.J."/>
            <person name="Klis F.M."/>
            <person name="Kovalchuk A."/>
            <person name="Krasevec N."/>
            <person name="Kubicek C.P."/>
            <person name="Liu B."/>
            <person name="Maccabe A."/>
            <person name="Meyer V."/>
            <person name="Mirabito P."/>
            <person name="Miskei M."/>
            <person name="Mos M."/>
            <person name="Mullins J."/>
            <person name="Nelson D.R."/>
            <person name="Nielsen J."/>
            <person name="Oakley B.R."/>
            <person name="Osmani S.A."/>
            <person name="Pakula T."/>
            <person name="Paszewski A."/>
            <person name="Paulsen I."/>
            <person name="Pilsyk S."/>
            <person name="Pocsi I."/>
            <person name="Punt P.J."/>
            <person name="Ram A.F."/>
            <person name="Ren Q."/>
            <person name="Robellet X."/>
            <person name="Robson G."/>
            <person name="Seiboth B."/>
            <person name="van Solingen P."/>
            <person name="Specht T."/>
            <person name="Sun J."/>
            <person name="Taheri-Talesh N."/>
            <person name="Takeshita N."/>
            <person name="Ussery D."/>
            <person name="vanKuyk P.A."/>
            <person name="Visser H."/>
            <person name="van de Vondervoort P.J."/>
            <person name="de Vries R.P."/>
            <person name="Walton J."/>
            <person name="Xiang X."/>
            <person name="Xiong Y."/>
            <person name="Zeng A.P."/>
            <person name="Brandt B.W."/>
            <person name="Cornell M.J."/>
            <person name="van den Hondel C.A."/>
            <person name="Visser J."/>
            <person name="Oliver S.G."/>
            <person name="Turner G."/>
        </authorList>
    </citation>
    <scope>GENOME REANNOTATION</scope>
    <source>
        <strain>FGSC A4 / ATCC 38163 / CBS 112.46 / NRRL 194 / M139</strain>
    </source>
</reference>
<reference key="3">
    <citation type="journal article" date="2023" name="Nat. Commun.">
        <title>A seven-transmembrane methyltransferase catalysing N-terminal histidine methylation of lytic polysaccharide monooxygenases.</title>
        <authorList>
            <person name="Batth T.S."/>
            <person name="Simonsen J.L."/>
            <person name="Hernandez-Rollan C."/>
            <person name="Brander S."/>
            <person name="Morth J.P."/>
            <person name="Johansen K.S."/>
            <person name="Noerholm M.H.H."/>
            <person name="Hoof J.B."/>
            <person name="Olsen J.V."/>
        </authorList>
    </citation>
    <scope>IDENTIFICATION BY MASS SPECTROMETRY</scope>
    <scope>METHYLATION AT HIS-24</scope>
</reference>
<gene>
    <name type="ORF">ANIA_04702</name>
</gene>
<proteinExistence type="evidence at protein level"/>
<name>X325_EMENI</name>
<dbReference type="EMBL" id="BN001303">
    <property type="protein sequence ID" value="CBF76965.1"/>
    <property type="molecule type" value="Genomic_DNA"/>
</dbReference>
<dbReference type="RefSeq" id="XP_662306.1">
    <property type="nucleotide sequence ID" value="XM_657214.2"/>
</dbReference>
<dbReference type="SMR" id="Q5B428"/>
<dbReference type="STRING" id="227321.Q5B428"/>
<dbReference type="EnsemblFungi" id="CBF76965">
    <property type="protein sequence ID" value="CBF76965"/>
    <property type="gene ID" value="ANIA_04702"/>
</dbReference>
<dbReference type="GeneID" id="2872502"/>
<dbReference type="KEGG" id="ani:ANIA_04702"/>
<dbReference type="VEuPathDB" id="FungiDB:AN4702"/>
<dbReference type="eggNOG" id="ENOG502SIF7">
    <property type="taxonomic scope" value="Eukaryota"/>
</dbReference>
<dbReference type="HOGENOM" id="CLU_070647_1_1_1"/>
<dbReference type="InParanoid" id="Q5B428"/>
<dbReference type="OMA" id="KNRTYWP"/>
<dbReference type="OrthoDB" id="5329488at2759"/>
<dbReference type="Proteomes" id="UP000000560">
    <property type="component" value="Chromosome III"/>
</dbReference>
<dbReference type="GO" id="GO:0005886">
    <property type="term" value="C:plasma membrane"/>
    <property type="evidence" value="ECO:0007669"/>
    <property type="project" value="UniProtKB-SubCell"/>
</dbReference>
<dbReference type="GO" id="GO:0098552">
    <property type="term" value="C:side of membrane"/>
    <property type="evidence" value="ECO:0007669"/>
    <property type="project" value="UniProtKB-KW"/>
</dbReference>
<dbReference type="GO" id="GO:0046872">
    <property type="term" value="F:metal ion binding"/>
    <property type="evidence" value="ECO:0007669"/>
    <property type="project" value="UniProtKB-KW"/>
</dbReference>
<dbReference type="CDD" id="cd21176">
    <property type="entry name" value="LPMO_auxiliary-like"/>
    <property type="match status" value="1"/>
</dbReference>
<dbReference type="InterPro" id="IPR046936">
    <property type="entry name" value="BIM1-like"/>
</dbReference>
<dbReference type="InterPro" id="IPR046530">
    <property type="entry name" value="BIM1-like_dom"/>
</dbReference>
<dbReference type="PANTHER" id="PTHR34992:SF10">
    <property type="entry name" value="COPPER ACQUISITION FACTOR BIM1-LIKE DOMAIN-CONTAINING PROTEIN"/>
    <property type="match status" value="1"/>
</dbReference>
<dbReference type="PANTHER" id="PTHR34992">
    <property type="entry name" value="HYPHAL ANASTAMOSIS-7 PROTEIN"/>
    <property type="match status" value="1"/>
</dbReference>
<dbReference type="Pfam" id="PF20238">
    <property type="entry name" value="BIM1-like_dom"/>
    <property type="match status" value="1"/>
</dbReference>